<reference key="1">
    <citation type="journal article" date="2007" name="DNA Res.">
        <title>Complete genomic structure of the bloom-forming toxic cyanobacterium Microcystis aeruginosa NIES-843.</title>
        <authorList>
            <person name="Kaneko T."/>
            <person name="Nakajima N."/>
            <person name="Okamoto S."/>
            <person name="Suzuki I."/>
            <person name="Tanabe Y."/>
            <person name="Tamaoki M."/>
            <person name="Nakamura Y."/>
            <person name="Kasai F."/>
            <person name="Watanabe A."/>
            <person name="Kawashima K."/>
            <person name="Kishida Y."/>
            <person name="Ono A."/>
            <person name="Shimizu Y."/>
            <person name="Takahashi C."/>
            <person name="Minami C."/>
            <person name="Fujishiro T."/>
            <person name="Kohara M."/>
            <person name="Katoh M."/>
            <person name="Nakazaki N."/>
            <person name="Nakayama S."/>
            <person name="Yamada M."/>
            <person name="Tabata S."/>
            <person name="Watanabe M.M."/>
        </authorList>
    </citation>
    <scope>NUCLEOTIDE SEQUENCE [LARGE SCALE GENOMIC DNA]</scope>
    <source>
        <strain>NIES-843 / IAM M-247</strain>
    </source>
</reference>
<comment type="function">
    <text evidence="1">Catalyzes the radical-mediated synthesis of 5-amino-5-(4-hydroxybenzyl)-6-(D-ribitylimino)-5,6-dihydrouracil from 5-amino-6-(D-ribitylamino)uracil and L-tyrosine.</text>
</comment>
<comment type="catalytic activity">
    <reaction evidence="1">
        <text>5-amino-6-(D-ribitylamino)uracil + L-tyrosine + S-adenosyl-L-methionine = 5-amino-5-(4-hydroxybenzyl)-6-(D-ribitylimino)-5,6-dihydrouracil + 2-iminoacetate + 5'-deoxyadenosine + L-methionine + H(+)</text>
        <dbReference type="Rhea" id="RHEA:55200"/>
        <dbReference type="ChEBI" id="CHEBI:15378"/>
        <dbReference type="ChEBI" id="CHEBI:15934"/>
        <dbReference type="ChEBI" id="CHEBI:17319"/>
        <dbReference type="ChEBI" id="CHEBI:57844"/>
        <dbReference type="ChEBI" id="CHEBI:58315"/>
        <dbReference type="ChEBI" id="CHEBI:59789"/>
        <dbReference type="ChEBI" id="CHEBI:77846"/>
        <dbReference type="ChEBI" id="CHEBI:85936"/>
        <dbReference type="EC" id="2.5.1.147"/>
    </reaction>
</comment>
<comment type="cofactor">
    <cofactor evidence="1">
        <name>[4Fe-4S] cluster</name>
        <dbReference type="ChEBI" id="CHEBI:49883"/>
    </cofactor>
    <text evidence="1">Binds 1 [4Fe-4S] cluster. The cluster is coordinated with 3 cysteines and an exchangeable S-adenosyl-L-methionine.</text>
</comment>
<comment type="pathway">
    <text evidence="1">Cofactor biosynthesis; coenzyme F0 biosynthesis.</text>
</comment>
<comment type="subunit">
    <text evidence="1">Consists of two subunits, CofG and CofH.</text>
</comment>
<comment type="similarity">
    <text evidence="1">Belongs to the radical SAM superfamily. CofH family.</text>
</comment>
<gene>
    <name evidence="1" type="primary">cofH</name>
    <name type="ordered locus">MAE_44400</name>
</gene>
<protein>
    <recommendedName>
        <fullName evidence="1">5-amino-6-(D-ribitylamino)uracil--L-tyrosine 4-hydroxyphenyl transferase</fullName>
        <ecNumber evidence="1">2.5.1.147</ecNumber>
    </recommendedName>
    <alternativeName>
        <fullName evidence="1">FO synthase subunit 2</fullName>
    </alternativeName>
</protein>
<evidence type="ECO:0000255" key="1">
    <source>
        <dbReference type="HAMAP-Rule" id="MF_01612"/>
    </source>
</evidence>
<evidence type="ECO:0000255" key="2">
    <source>
        <dbReference type="PROSITE-ProRule" id="PRU01266"/>
    </source>
</evidence>
<feature type="chain" id="PRO_0000335562" description="5-amino-6-(D-ribitylamino)uracil--L-tyrosine 4-hydroxyphenyl transferase">
    <location>
        <begin position="1"/>
        <end position="378"/>
    </location>
</feature>
<feature type="domain" description="Radical SAM core" evidence="2">
    <location>
        <begin position="59"/>
        <end position="306"/>
    </location>
</feature>
<feature type="binding site" evidence="1">
    <location>
        <position position="73"/>
    </location>
    <ligand>
        <name>[4Fe-4S] cluster</name>
        <dbReference type="ChEBI" id="CHEBI:49883"/>
        <note>4Fe-4S-S-AdoMet</note>
    </ligand>
</feature>
<feature type="binding site" evidence="1">
    <location>
        <position position="77"/>
    </location>
    <ligand>
        <name>[4Fe-4S] cluster</name>
        <dbReference type="ChEBI" id="CHEBI:49883"/>
        <note>4Fe-4S-S-AdoMet</note>
    </ligand>
</feature>
<feature type="binding site" evidence="1">
    <location>
        <position position="80"/>
    </location>
    <ligand>
        <name>[4Fe-4S] cluster</name>
        <dbReference type="ChEBI" id="CHEBI:49883"/>
        <note>4Fe-4S-S-AdoMet</note>
    </ligand>
</feature>
<organism>
    <name type="scientific">Microcystis aeruginosa (strain NIES-843 / IAM M-2473)</name>
    <dbReference type="NCBI Taxonomy" id="449447"/>
    <lineage>
        <taxon>Bacteria</taxon>
        <taxon>Bacillati</taxon>
        <taxon>Cyanobacteriota</taxon>
        <taxon>Cyanophyceae</taxon>
        <taxon>Oscillatoriophycideae</taxon>
        <taxon>Chroococcales</taxon>
        <taxon>Microcystaceae</taxon>
        <taxon>Microcystis</taxon>
    </lineage>
</organism>
<proteinExistence type="inferred from homology"/>
<accession>B0JTF9</accession>
<keyword id="KW-0004">4Fe-4S</keyword>
<keyword id="KW-0408">Iron</keyword>
<keyword id="KW-0411">Iron-sulfur</keyword>
<keyword id="KW-0479">Metal-binding</keyword>
<keyword id="KW-0949">S-adenosyl-L-methionine</keyword>
<keyword id="KW-0808">Transferase</keyword>
<name>COFH_MICAN</name>
<sequence length="378" mass="41786">MTNSSITAPVTDILAKARSGANLSAKEAIILLETTDNRLIAWIRETADFLRRQQTGDTVTYVINRNINFSNICEQHCSFCAFRRDEDEEGAFWLNLEEIIAKAADAVRRGATEICMQGGLNPKAKIKGNSLDYYLEIVKNLKQAFPDLHLHAFSPQEVQFIAREDGLSYEKVIASLQEAGVNSLPGTAAEVLVDEVRRVICPEKIDAATWLEIVGTAHRLGLHTTSTMLCGHIETPSQQVQHLEKIRKQQEIALENNYPAKITEFILLPFVGQSAPKPLRNRVGQDQPILADTLKLTAVARIYLGNSIKNHQPSWVKLGLQGATEALNWGCNDLGGTLMEEHITTMAGALGGTCLTVEELATAIKSLDRPARQRDTIY</sequence>
<dbReference type="EC" id="2.5.1.147" evidence="1"/>
<dbReference type="EMBL" id="AP009552">
    <property type="protein sequence ID" value="BAG04262.1"/>
    <property type="molecule type" value="Genomic_DNA"/>
</dbReference>
<dbReference type="RefSeq" id="WP_012267056.1">
    <property type="nucleotide sequence ID" value="NC_010296.1"/>
</dbReference>
<dbReference type="SMR" id="B0JTF9"/>
<dbReference type="STRING" id="449447.MAE_44400"/>
<dbReference type="PaxDb" id="449447-MAE_44400"/>
<dbReference type="EnsemblBacteria" id="BAG04262">
    <property type="protein sequence ID" value="BAG04262"/>
    <property type="gene ID" value="MAE_44400"/>
</dbReference>
<dbReference type="KEGG" id="mar:MAE_44400"/>
<dbReference type="PATRIC" id="fig|449447.4.peg.4024"/>
<dbReference type="eggNOG" id="COG1060">
    <property type="taxonomic scope" value="Bacteria"/>
</dbReference>
<dbReference type="HOGENOM" id="CLU_040406_1_1_3"/>
<dbReference type="BioCyc" id="MAER449447:MAE_RS19235-MONOMER"/>
<dbReference type="UniPathway" id="UPA00072"/>
<dbReference type="Proteomes" id="UP000001510">
    <property type="component" value="Chromosome"/>
</dbReference>
<dbReference type="GO" id="GO:0051539">
    <property type="term" value="F:4 iron, 4 sulfur cluster binding"/>
    <property type="evidence" value="ECO:0007669"/>
    <property type="project" value="UniProtKB-KW"/>
</dbReference>
<dbReference type="GO" id="GO:0141093">
    <property type="term" value="F:5-amino-6-(D-ribitylamino)uracil--L-tyrosine 4-hydroxyphenyl transferase activity"/>
    <property type="evidence" value="ECO:0007669"/>
    <property type="project" value="UniProtKB-EC"/>
</dbReference>
<dbReference type="GO" id="GO:0044689">
    <property type="term" value="F:7,8-didemethyl-8-hydroxy-5-deazariboflavin synthase activity"/>
    <property type="evidence" value="ECO:0007669"/>
    <property type="project" value="TreeGrafter"/>
</dbReference>
<dbReference type="GO" id="GO:0005506">
    <property type="term" value="F:iron ion binding"/>
    <property type="evidence" value="ECO:0007669"/>
    <property type="project" value="UniProtKB-UniRule"/>
</dbReference>
<dbReference type="CDD" id="cd01335">
    <property type="entry name" value="Radical_SAM"/>
    <property type="match status" value="1"/>
</dbReference>
<dbReference type="Gene3D" id="3.20.20.70">
    <property type="entry name" value="Aldolase class I"/>
    <property type="match status" value="1"/>
</dbReference>
<dbReference type="HAMAP" id="MF_01612">
    <property type="entry name" value="FO_synth_sub2"/>
    <property type="match status" value="1"/>
</dbReference>
<dbReference type="InterPro" id="IPR013785">
    <property type="entry name" value="Aldolase_TIM"/>
</dbReference>
<dbReference type="InterPro" id="IPR045567">
    <property type="entry name" value="CofH/MnqC-like_C"/>
</dbReference>
<dbReference type="InterPro" id="IPR019940">
    <property type="entry name" value="CofH_family"/>
</dbReference>
<dbReference type="InterPro" id="IPR034405">
    <property type="entry name" value="F420"/>
</dbReference>
<dbReference type="InterPro" id="IPR020050">
    <property type="entry name" value="FO_synthase_su2"/>
</dbReference>
<dbReference type="InterPro" id="IPR007197">
    <property type="entry name" value="rSAM"/>
</dbReference>
<dbReference type="NCBIfam" id="TIGR00423">
    <property type="entry name" value="CofH family radical SAM protein"/>
    <property type="match status" value="1"/>
</dbReference>
<dbReference type="NCBIfam" id="TIGR03551">
    <property type="entry name" value="F420_cofH"/>
    <property type="match status" value="1"/>
</dbReference>
<dbReference type="NCBIfam" id="NF005609">
    <property type="entry name" value="PRK07360.1"/>
    <property type="match status" value="1"/>
</dbReference>
<dbReference type="PANTHER" id="PTHR43076">
    <property type="entry name" value="FO SYNTHASE (COFH)"/>
    <property type="match status" value="1"/>
</dbReference>
<dbReference type="PANTHER" id="PTHR43076:SF1">
    <property type="entry name" value="LIPOYL SYNTHASE 2"/>
    <property type="match status" value="1"/>
</dbReference>
<dbReference type="Pfam" id="PF19288">
    <property type="entry name" value="CofH_C"/>
    <property type="match status" value="1"/>
</dbReference>
<dbReference type="Pfam" id="PF04055">
    <property type="entry name" value="Radical_SAM"/>
    <property type="match status" value="1"/>
</dbReference>
<dbReference type="PIRSF" id="PIRSF004762">
    <property type="entry name" value="CHP00423"/>
    <property type="match status" value="1"/>
</dbReference>
<dbReference type="SFLD" id="SFLDF00293">
    <property type="entry name" value="((2_3_4_5-tetrahydroxypentyl)a"/>
    <property type="match status" value="1"/>
</dbReference>
<dbReference type="SFLD" id="SFLDG01389">
    <property type="entry name" value="menaquinone_synthsis_involved"/>
    <property type="match status" value="1"/>
</dbReference>
<dbReference type="SFLD" id="SFLDS00029">
    <property type="entry name" value="Radical_SAM"/>
    <property type="match status" value="1"/>
</dbReference>
<dbReference type="SUPFAM" id="SSF102114">
    <property type="entry name" value="Radical SAM enzymes"/>
    <property type="match status" value="1"/>
</dbReference>
<dbReference type="PROSITE" id="PS51918">
    <property type="entry name" value="RADICAL_SAM"/>
    <property type="match status" value="1"/>
</dbReference>